<organism>
    <name type="scientific">Staphylococcus aureus (strain Newman)</name>
    <dbReference type="NCBI Taxonomy" id="426430"/>
    <lineage>
        <taxon>Bacteria</taxon>
        <taxon>Bacillati</taxon>
        <taxon>Bacillota</taxon>
        <taxon>Bacilli</taxon>
        <taxon>Bacillales</taxon>
        <taxon>Staphylococcaceae</taxon>
        <taxon>Staphylococcus</taxon>
    </lineage>
</organism>
<accession>A6QHF6</accession>
<dbReference type="EMBL" id="AP009351">
    <property type="protein sequence ID" value="BAF67788.1"/>
    <property type="molecule type" value="Genomic_DNA"/>
</dbReference>
<dbReference type="RefSeq" id="WP_000134779.1">
    <property type="nucleotide sequence ID" value="NZ_JBBIAE010000001.1"/>
</dbReference>
<dbReference type="KEGG" id="sae:NWMN_1516"/>
<dbReference type="HOGENOM" id="CLU_146610_2_1_9"/>
<dbReference type="Proteomes" id="UP000006386">
    <property type="component" value="Chromosome"/>
</dbReference>
<dbReference type="HAMAP" id="MF_01448">
    <property type="entry name" value="UPF0473"/>
    <property type="match status" value="1"/>
</dbReference>
<dbReference type="InterPro" id="IPR009711">
    <property type="entry name" value="UPF0473"/>
</dbReference>
<dbReference type="NCBIfam" id="NF010214">
    <property type="entry name" value="PRK13678.1-1"/>
    <property type="match status" value="1"/>
</dbReference>
<dbReference type="PANTHER" id="PTHR40066">
    <property type="entry name" value="UPF0473 PROTEIN CBO2561/CLC_2432"/>
    <property type="match status" value="1"/>
</dbReference>
<dbReference type="PANTHER" id="PTHR40066:SF1">
    <property type="entry name" value="UPF0473 PROTEIN CBO2561_CLC_2432"/>
    <property type="match status" value="1"/>
</dbReference>
<dbReference type="Pfam" id="PF06949">
    <property type="entry name" value="DUF1292"/>
    <property type="match status" value="1"/>
</dbReference>
<protein>
    <recommendedName>
        <fullName evidence="1">UPF0473 protein NWMN_1516</fullName>
    </recommendedName>
</protein>
<evidence type="ECO:0000255" key="1">
    <source>
        <dbReference type="HAMAP-Rule" id="MF_01448"/>
    </source>
</evidence>
<feature type="chain" id="PRO_1000073528" description="UPF0473 protein NWMN_1516">
    <location>
        <begin position="1"/>
        <end position="102"/>
    </location>
</feature>
<reference key="1">
    <citation type="journal article" date="2008" name="J. Bacteriol.">
        <title>Genome sequence of Staphylococcus aureus strain Newman and comparative analysis of staphylococcal genomes: polymorphism and evolution of two major pathogenicity islands.</title>
        <authorList>
            <person name="Baba T."/>
            <person name="Bae T."/>
            <person name="Schneewind O."/>
            <person name="Takeuchi F."/>
            <person name="Hiramatsu K."/>
        </authorList>
    </citation>
    <scope>NUCLEOTIDE SEQUENCE [LARGE SCALE GENOMIC DNA]</scope>
    <source>
        <strain>Newman</strain>
    </source>
</reference>
<name>Y1516_STAAE</name>
<gene>
    <name type="ordered locus">NWMN_1516</name>
</gene>
<proteinExistence type="inferred from homology"/>
<sequence>MTEHNHDSQLEINNEEELLTLFDEEGNEVLYRKVLEFYHPEFKKEYVILAEEGAQSDEDDMIELVPMINEPDESGDGGKLVPIETDEEWDMIEEVVNTEMEE</sequence>
<comment type="similarity">
    <text evidence="1">Belongs to the UPF0473 family.</text>
</comment>